<comment type="function">
    <text evidence="1">May help in the organization of the PsaE and PsaF subunits.</text>
</comment>
<comment type="subcellular location">
    <subcellularLocation>
        <location evidence="1">Cellular thylakoid membrane</location>
        <topology evidence="1">Single-pass membrane protein</topology>
    </subcellularLocation>
</comment>
<comment type="similarity">
    <text evidence="1">Belongs to the PsaJ family.</text>
</comment>
<comment type="sequence caution" evidence="2">
    <conflict type="erroneous initiation">
        <sequence resource="EMBL-CDS" id="BAG04552"/>
    </conflict>
</comment>
<feature type="chain" id="PRO_0000354114" description="Photosystem I reaction center subunit IX">
    <location>
        <begin position="1"/>
        <end position="42"/>
    </location>
</feature>
<feature type="transmembrane region" description="Helical" evidence="1">
    <location>
        <begin position="7"/>
        <end position="27"/>
    </location>
</feature>
<dbReference type="EMBL" id="AP009552">
    <property type="protein sequence ID" value="BAG04552.1"/>
    <property type="status" value="ALT_INIT"/>
    <property type="molecule type" value="Genomic_DNA"/>
</dbReference>
<dbReference type="RefSeq" id="WP_002738148.1">
    <property type="nucleotide sequence ID" value="NC_010296.1"/>
</dbReference>
<dbReference type="SMR" id="B0JUV4"/>
<dbReference type="STRING" id="449447.MAE_47300"/>
<dbReference type="PaxDb" id="449447-MAE_47300"/>
<dbReference type="EnsemblBacteria" id="BAG04552">
    <property type="protein sequence ID" value="BAG04552"/>
    <property type="gene ID" value="MAE_47300"/>
</dbReference>
<dbReference type="GeneID" id="66705527"/>
<dbReference type="KEGG" id="mar:MAE_47300"/>
<dbReference type="eggNOG" id="ENOG5033A5A">
    <property type="taxonomic scope" value="Bacteria"/>
</dbReference>
<dbReference type="HOGENOM" id="CLU_212133_0_0_3"/>
<dbReference type="Proteomes" id="UP000001510">
    <property type="component" value="Chromosome"/>
</dbReference>
<dbReference type="GO" id="GO:0009522">
    <property type="term" value="C:photosystem I"/>
    <property type="evidence" value="ECO:0007669"/>
    <property type="project" value="UniProtKB-KW"/>
</dbReference>
<dbReference type="GO" id="GO:0031676">
    <property type="term" value="C:plasma membrane-derived thylakoid membrane"/>
    <property type="evidence" value="ECO:0007669"/>
    <property type="project" value="UniProtKB-SubCell"/>
</dbReference>
<dbReference type="GO" id="GO:0015979">
    <property type="term" value="P:photosynthesis"/>
    <property type="evidence" value="ECO:0007669"/>
    <property type="project" value="UniProtKB-UniRule"/>
</dbReference>
<dbReference type="Gene3D" id="1.20.5.510">
    <property type="entry name" value="Single helix bin"/>
    <property type="match status" value="1"/>
</dbReference>
<dbReference type="HAMAP" id="MF_00522">
    <property type="entry name" value="PSI_PsaJ"/>
    <property type="match status" value="1"/>
</dbReference>
<dbReference type="InterPro" id="IPR002615">
    <property type="entry name" value="PSI_PsaJ"/>
</dbReference>
<dbReference type="InterPro" id="IPR036062">
    <property type="entry name" value="PSI_PsaJ_sf"/>
</dbReference>
<dbReference type="NCBIfam" id="NF002743">
    <property type="entry name" value="PRK02733.1"/>
    <property type="match status" value="1"/>
</dbReference>
<dbReference type="PANTHER" id="PTHR36082">
    <property type="match status" value="1"/>
</dbReference>
<dbReference type="PANTHER" id="PTHR36082:SF2">
    <property type="entry name" value="PHOTOSYSTEM I REACTION CENTER SUBUNIT IX"/>
    <property type="match status" value="1"/>
</dbReference>
<dbReference type="Pfam" id="PF01701">
    <property type="entry name" value="PSI_PsaJ"/>
    <property type="match status" value="1"/>
</dbReference>
<dbReference type="SUPFAM" id="SSF81544">
    <property type="entry name" value="Subunit IX of photosystem I reaction centre, PsaJ"/>
    <property type="match status" value="1"/>
</dbReference>
<keyword id="KW-0472">Membrane</keyword>
<keyword id="KW-0602">Photosynthesis</keyword>
<keyword id="KW-0603">Photosystem I</keyword>
<keyword id="KW-0793">Thylakoid</keyword>
<keyword id="KW-0812">Transmembrane</keyword>
<keyword id="KW-1133">Transmembrane helix</keyword>
<organism>
    <name type="scientific">Microcystis aeruginosa (strain NIES-843 / IAM M-2473)</name>
    <dbReference type="NCBI Taxonomy" id="449447"/>
    <lineage>
        <taxon>Bacteria</taxon>
        <taxon>Bacillati</taxon>
        <taxon>Cyanobacteriota</taxon>
        <taxon>Cyanophyceae</taxon>
        <taxon>Oscillatoriophycideae</taxon>
        <taxon>Chroococcales</taxon>
        <taxon>Microcystaceae</taxon>
        <taxon>Microcystis</taxon>
    </lineage>
</organism>
<protein>
    <recommendedName>
        <fullName evidence="1">Photosystem I reaction center subunit IX</fullName>
    </recommendedName>
</protein>
<accession>B0JUV4</accession>
<evidence type="ECO:0000255" key="1">
    <source>
        <dbReference type="HAMAP-Rule" id="MF_00522"/>
    </source>
</evidence>
<evidence type="ECO:0000305" key="2"/>
<gene>
    <name evidence="1" type="primary">psaJ</name>
    <name type="ordered locus">MAE_47300</name>
</gene>
<proteinExistence type="inferred from homology"/>
<name>PSAJ_MICAN</name>
<sequence length="42" mass="4699">MEGLTKFLSSAPVLIMALLTFTAGILIEFNRFYPDLLFHPLG</sequence>
<reference key="1">
    <citation type="journal article" date="2007" name="DNA Res.">
        <title>Complete genomic structure of the bloom-forming toxic cyanobacterium Microcystis aeruginosa NIES-843.</title>
        <authorList>
            <person name="Kaneko T."/>
            <person name="Nakajima N."/>
            <person name="Okamoto S."/>
            <person name="Suzuki I."/>
            <person name="Tanabe Y."/>
            <person name="Tamaoki M."/>
            <person name="Nakamura Y."/>
            <person name="Kasai F."/>
            <person name="Watanabe A."/>
            <person name="Kawashima K."/>
            <person name="Kishida Y."/>
            <person name="Ono A."/>
            <person name="Shimizu Y."/>
            <person name="Takahashi C."/>
            <person name="Minami C."/>
            <person name="Fujishiro T."/>
            <person name="Kohara M."/>
            <person name="Katoh M."/>
            <person name="Nakazaki N."/>
            <person name="Nakayama S."/>
            <person name="Yamada M."/>
            <person name="Tabata S."/>
            <person name="Watanabe M.M."/>
        </authorList>
    </citation>
    <scope>NUCLEOTIDE SEQUENCE [LARGE SCALE GENOMIC DNA]</scope>
    <source>
        <strain>NIES-843 / IAM M-247</strain>
    </source>
</reference>